<accession>A6W1C7</accession>
<comment type="function">
    <text evidence="1">Involved in the biosynthesis of the central metabolite phospho-alpha-D-ribosyl-1-pyrophosphate (PRPP) via the transfer of pyrophosphoryl group from ATP to 1-hydroxyl of ribose-5-phosphate (Rib-5-P).</text>
</comment>
<comment type="catalytic activity">
    <reaction evidence="1">
        <text>D-ribose 5-phosphate + ATP = 5-phospho-alpha-D-ribose 1-diphosphate + AMP + H(+)</text>
        <dbReference type="Rhea" id="RHEA:15609"/>
        <dbReference type="ChEBI" id="CHEBI:15378"/>
        <dbReference type="ChEBI" id="CHEBI:30616"/>
        <dbReference type="ChEBI" id="CHEBI:58017"/>
        <dbReference type="ChEBI" id="CHEBI:78346"/>
        <dbReference type="ChEBI" id="CHEBI:456215"/>
        <dbReference type="EC" id="2.7.6.1"/>
    </reaction>
</comment>
<comment type="cofactor">
    <cofactor evidence="1">
        <name>Mg(2+)</name>
        <dbReference type="ChEBI" id="CHEBI:18420"/>
    </cofactor>
    <text evidence="1">Binds 2 Mg(2+) ions per subunit.</text>
</comment>
<comment type="pathway">
    <text evidence="1">Metabolic intermediate biosynthesis; 5-phospho-alpha-D-ribose 1-diphosphate biosynthesis; 5-phospho-alpha-D-ribose 1-diphosphate from D-ribose 5-phosphate (route I): step 1/1.</text>
</comment>
<comment type="subunit">
    <text evidence="1">Homohexamer.</text>
</comment>
<comment type="subcellular location">
    <subcellularLocation>
        <location evidence="1">Cytoplasm</location>
    </subcellularLocation>
</comment>
<comment type="similarity">
    <text evidence="1">Belongs to the ribose-phosphate pyrophosphokinase family. Class I subfamily.</text>
</comment>
<gene>
    <name evidence="1" type="primary">prs</name>
    <name type="ordered locus">Mmwyl1_3604</name>
</gene>
<keyword id="KW-0067">ATP-binding</keyword>
<keyword id="KW-0963">Cytoplasm</keyword>
<keyword id="KW-0418">Kinase</keyword>
<keyword id="KW-0460">Magnesium</keyword>
<keyword id="KW-0479">Metal-binding</keyword>
<keyword id="KW-0545">Nucleotide biosynthesis</keyword>
<keyword id="KW-0547">Nucleotide-binding</keyword>
<keyword id="KW-0808">Transferase</keyword>
<evidence type="ECO:0000255" key="1">
    <source>
        <dbReference type="HAMAP-Rule" id="MF_00583"/>
    </source>
</evidence>
<proteinExistence type="inferred from homology"/>
<name>KPRS_MARMS</name>
<protein>
    <recommendedName>
        <fullName evidence="1">Ribose-phosphate pyrophosphokinase</fullName>
        <shortName evidence="1">RPPK</shortName>
        <ecNumber evidence="1">2.7.6.1</ecNumber>
    </recommendedName>
    <alternativeName>
        <fullName evidence="1">5-phospho-D-ribosyl alpha-1-diphosphate synthase</fullName>
    </alternativeName>
    <alternativeName>
        <fullName evidence="1">Phosphoribosyl diphosphate synthase</fullName>
    </alternativeName>
    <alternativeName>
        <fullName evidence="1">Phosphoribosyl pyrophosphate synthase</fullName>
        <shortName evidence="1">P-Rib-PP synthase</shortName>
        <shortName evidence="1">PRPP synthase</shortName>
        <shortName evidence="1">PRPPase</shortName>
    </alternativeName>
</protein>
<dbReference type="EC" id="2.7.6.1" evidence="1"/>
<dbReference type="EMBL" id="CP000749">
    <property type="protein sequence ID" value="ABR72506.1"/>
    <property type="molecule type" value="Genomic_DNA"/>
</dbReference>
<dbReference type="SMR" id="A6W1C7"/>
<dbReference type="STRING" id="400668.Mmwyl1_3604"/>
<dbReference type="KEGG" id="mmw:Mmwyl1_3604"/>
<dbReference type="eggNOG" id="COG0462">
    <property type="taxonomic scope" value="Bacteria"/>
</dbReference>
<dbReference type="HOGENOM" id="CLU_033546_2_0_6"/>
<dbReference type="OrthoDB" id="9777067at2"/>
<dbReference type="UniPathway" id="UPA00087">
    <property type="reaction ID" value="UER00172"/>
</dbReference>
<dbReference type="GO" id="GO:0005737">
    <property type="term" value="C:cytoplasm"/>
    <property type="evidence" value="ECO:0007669"/>
    <property type="project" value="UniProtKB-SubCell"/>
</dbReference>
<dbReference type="GO" id="GO:0002189">
    <property type="term" value="C:ribose phosphate diphosphokinase complex"/>
    <property type="evidence" value="ECO:0007669"/>
    <property type="project" value="TreeGrafter"/>
</dbReference>
<dbReference type="GO" id="GO:0005524">
    <property type="term" value="F:ATP binding"/>
    <property type="evidence" value="ECO:0007669"/>
    <property type="project" value="UniProtKB-KW"/>
</dbReference>
<dbReference type="GO" id="GO:0016301">
    <property type="term" value="F:kinase activity"/>
    <property type="evidence" value="ECO:0007669"/>
    <property type="project" value="UniProtKB-KW"/>
</dbReference>
<dbReference type="GO" id="GO:0000287">
    <property type="term" value="F:magnesium ion binding"/>
    <property type="evidence" value="ECO:0007669"/>
    <property type="project" value="UniProtKB-UniRule"/>
</dbReference>
<dbReference type="GO" id="GO:0004749">
    <property type="term" value="F:ribose phosphate diphosphokinase activity"/>
    <property type="evidence" value="ECO:0007669"/>
    <property type="project" value="UniProtKB-UniRule"/>
</dbReference>
<dbReference type="GO" id="GO:0006015">
    <property type="term" value="P:5-phosphoribose 1-diphosphate biosynthetic process"/>
    <property type="evidence" value="ECO:0007669"/>
    <property type="project" value="UniProtKB-UniRule"/>
</dbReference>
<dbReference type="GO" id="GO:0006164">
    <property type="term" value="P:purine nucleotide biosynthetic process"/>
    <property type="evidence" value="ECO:0007669"/>
    <property type="project" value="TreeGrafter"/>
</dbReference>
<dbReference type="GO" id="GO:0009156">
    <property type="term" value="P:ribonucleoside monophosphate biosynthetic process"/>
    <property type="evidence" value="ECO:0007669"/>
    <property type="project" value="InterPro"/>
</dbReference>
<dbReference type="CDD" id="cd06223">
    <property type="entry name" value="PRTases_typeI"/>
    <property type="match status" value="1"/>
</dbReference>
<dbReference type="FunFam" id="3.40.50.2020:FF:000001">
    <property type="entry name" value="Ribose-phosphate pyrophosphokinase"/>
    <property type="match status" value="1"/>
</dbReference>
<dbReference type="Gene3D" id="3.40.50.2020">
    <property type="match status" value="2"/>
</dbReference>
<dbReference type="HAMAP" id="MF_00583_B">
    <property type="entry name" value="RibP_PPkinase_B"/>
    <property type="match status" value="1"/>
</dbReference>
<dbReference type="InterPro" id="IPR000842">
    <property type="entry name" value="PRib_PP_synth_CS"/>
</dbReference>
<dbReference type="InterPro" id="IPR029099">
    <property type="entry name" value="Pribosyltran_N"/>
</dbReference>
<dbReference type="InterPro" id="IPR000836">
    <property type="entry name" value="PRibTrfase_dom"/>
</dbReference>
<dbReference type="InterPro" id="IPR029057">
    <property type="entry name" value="PRTase-like"/>
</dbReference>
<dbReference type="InterPro" id="IPR005946">
    <property type="entry name" value="Rib-P_diPkinase"/>
</dbReference>
<dbReference type="InterPro" id="IPR037515">
    <property type="entry name" value="Rib-P_diPkinase_bac"/>
</dbReference>
<dbReference type="NCBIfam" id="NF002320">
    <property type="entry name" value="PRK01259.1"/>
    <property type="match status" value="1"/>
</dbReference>
<dbReference type="NCBIfam" id="NF003428">
    <property type="entry name" value="PRK04923.1"/>
    <property type="match status" value="1"/>
</dbReference>
<dbReference type="NCBIfam" id="TIGR01251">
    <property type="entry name" value="ribP_PPkin"/>
    <property type="match status" value="1"/>
</dbReference>
<dbReference type="PANTHER" id="PTHR10210">
    <property type="entry name" value="RIBOSE-PHOSPHATE DIPHOSPHOKINASE FAMILY MEMBER"/>
    <property type="match status" value="1"/>
</dbReference>
<dbReference type="PANTHER" id="PTHR10210:SF41">
    <property type="entry name" value="RIBOSE-PHOSPHATE PYROPHOSPHOKINASE 1, CHLOROPLASTIC"/>
    <property type="match status" value="1"/>
</dbReference>
<dbReference type="Pfam" id="PF14572">
    <property type="entry name" value="Pribosyl_synth"/>
    <property type="match status" value="1"/>
</dbReference>
<dbReference type="Pfam" id="PF13793">
    <property type="entry name" value="Pribosyltran_N"/>
    <property type="match status" value="1"/>
</dbReference>
<dbReference type="SMART" id="SM01400">
    <property type="entry name" value="Pribosyltran_N"/>
    <property type="match status" value="1"/>
</dbReference>
<dbReference type="SUPFAM" id="SSF53271">
    <property type="entry name" value="PRTase-like"/>
    <property type="match status" value="1"/>
</dbReference>
<dbReference type="PROSITE" id="PS00114">
    <property type="entry name" value="PRPP_SYNTHASE"/>
    <property type="match status" value="1"/>
</dbReference>
<sequence>MSKLMVFTGNANPELARRVVRRLGLPIGNATVGKFSDSEITVEINENVRGKDVFIIQSTCAPSNDNLMELIVMADALRRASATRVTAVIPYFGYARQDRRVRSARVPITAKVVADMISAVGINRVLTVDLHADQIQGFFDIPVDNVYATPLLLDDLQRQGHENITVVSPDVGGVVRARAFAKLLDDADLAIIDKRRPRANEAQIMHLIGDVEGKTCVLVDDMCDTGGTLCAAAKALKEHGAAKVLAYCTHPVLSGKAIENIKNSVLDELVVTDTIPLTQEALNCPQIRQLSMSDIMAEAVRRVCNEESISAMFGA</sequence>
<organism>
    <name type="scientific">Marinomonas sp. (strain MWYL1)</name>
    <dbReference type="NCBI Taxonomy" id="400668"/>
    <lineage>
        <taxon>Bacteria</taxon>
        <taxon>Pseudomonadati</taxon>
        <taxon>Pseudomonadota</taxon>
        <taxon>Gammaproteobacteria</taxon>
        <taxon>Oceanospirillales</taxon>
        <taxon>Oceanospirillaceae</taxon>
        <taxon>Marinomonas</taxon>
    </lineage>
</organism>
<reference key="1">
    <citation type="submission" date="2007-06" db="EMBL/GenBank/DDBJ databases">
        <title>Complete sequence of Marinomonas sp. MWYL1.</title>
        <authorList>
            <consortium name="US DOE Joint Genome Institute"/>
            <person name="Copeland A."/>
            <person name="Lucas S."/>
            <person name="Lapidus A."/>
            <person name="Barry K."/>
            <person name="Glavina del Rio T."/>
            <person name="Dalin E."/>
            <person name="Tice H."/>
            <person name="Pitluck S."/>
            <person name="Kiss H."/>
            <person name="Brettin T."/>
            <person name="Bruce D."/>
            <person name="Detter J.C."/>
            <person name="Han C."/>
            <person name="Schmutz J."/>
            <person name="Larimer F."/>
            <person name="Land M."/>
            <person name="Hauser L."/>
            <person name="Kyrpides N."/>
            <person name="Kim E."/>
            <person name="Johnston A.W.B."/>
            <person name="Todd J.D."/>
            <person name="Rogers R."/>
            <person name="Wexler M."/>
            <person name="Bond P.L."/>
            <person name="Li Y."/>
            <person name="Richardson P."/>
        </authorList>
    </citation>
    <scope>NUCLEOTIDE SEQUENCE [LARGE SCALE GENOMIC DNA]</scope>
    <source>
        <strain>MWYL1</strain>
    </source>
</reference>
<feature type="chain" id="PRO_1000082406" description="Ribose-phosphate pyrophosphokinase">
    <location>
        <begin position="1"/>
        <end position="315"/>
    </location>
</feature>
<feature type="active site" evidence="1">
    <location>
        <position position="194"/>
    </location>
</feature>
<feature type="binding site" evidence="1">
    <location>
        <begin position="37"/>
        <end position="39"/>
    </location>
    <ligand>
        <name>ATP</name>
        <dbReference type="ChEBI" id="CHEBI:30616"/>
    </ligand>
</feature>
<feature type="binding site" evidence="1">
    <location>
        <begin position="96"/>
        <end position="97"/>
    </location>
    <ligand>
        <name>ATP</name>
        <dbReference type="ChEBI" id="CHEBI:30616"/>
    </ligand>
</feature>
<feature type="binding site" evidence="1">
    <location>
        <position position="131"/>
    </location>
    <ligand>
        <name>Mg(2+)</name>
        <dbReference type="ChEBI" id="CHEBI:18420"/>
        <label>1</label>
    </ligand>
</feature>
<feature type="binding site" evidence="1">
    <location>
        <position position="170"/>
    </location>
    <ligand>
        <name>Mg(2+)</name>
        <dbReference type="ChEBI" id="CHEBI:18420"/>
        <label>2</label>
    </ligand>
</feature>
<feature type="binding site" evidence="1">
    <location>
        <position position="196"/>
    </location>
    <ligand>
        <name>D-ribose 5-phosphate</name>
        <dbReference type="ChEBI" id="CHEBI:78346"/>
    </ligand>
</feature>
<feature type="binding site" evidence="1">
    <location>
        <position position="220"/>
    </location>
    <ligand>
        <name>D-ribose 5-phosphate</name>
        <dbReference type="ChEBI" id="CHEBI:78346"/>
    </ligand>
</feature>
<feature type="binding site" evidence="1">
    <location>
        <begin position="224"/>
        <end position="228"/>
    </location>
    <ligand>
        <name>D-ribose 5-phosphate</name>
        <dbReference type="ChEBI" id="CHEBI:78346"/>
    </ligand>
</feature>